<accession>Q2P3J8</accession>
<organism>
    <name type="scientific">Xanthomonas oryzae pv. oryzae (strain MAFF 311018)</name>
    <dbReference type="NCBI Taxonomy" id="342109"/>
    <lineage>
        <taxon>Bacteria</taxon>
        <taxon>Pseudomonadati</taxon>
        <taxon>Pseudomonadota</taxon>
        <taxon>Gammaproteobacteria</taxon>
        <taxon>Lysobacterales</taxon>
        <taxon>Lysobacteraceae</taxon>
        <taxon>Xanthomonas</taxon>
    </lineage>
</organism>
<dbReference type="EC" id="4.3.2.10" evidence="1"/>
<dbReference type="EMBL" id="AP008229">
    <property type="protein sequence ID" value="BAE68879.1"/>
    <property type="molecule type" value="Genomic_DNA"/>
</dbReference>
<dbReference type="RefSeq" id="WP_011258947.1">
    <property type="nucleotide sequence ID" value="NC_007705.1"/>
</dbReference>
<dbReference type="SMR" id="Q2P3J8"/>
<dbReference type="KEGG" id="xom:XOO2124"/>
<dbReference type="HOGENOM" id="CLU_048577_4_0_6"/>
<dbReference type="UniPathway" id="UPA00031">
    <property type="reaction ID" value="UER00010"/>
</dbReference>
<dbReference type="GO" id="GO:0005737">
    <property type="term" value="C:cytoplasm"/>
    <property type="evidence" value="ECO:0007669"/>
    <property type="project" value="UniProtKB-SubCell"/>
</dbReference>
<dbReference type="GO" id="GO:0000107">
    <property type="term" value="F:imidazoleglycerol-phosphate synthase activity"/>
    <property type="evidence" value="ECO:0007669"/>
    <property type="project" value="UniProtKB-UniRule"/>
</dbReference>
<dbReference type="GO" id="GO:0016829">
    <property type="term" value="F:lyase activity"/>
    <property type="evidence" value="ECO:0007669"/>
    <property type="project" value="UniProtKB-KW"/>
</dbReference>
<dbReference type="GO" id="GO:0000105">
    <property type="term" value="P:L-histidine biosynthetic process"/>
    <property type="evidence" value="ECO:0007669"/>
    <property type="project" value="UniProtKB-UniRule"/>
</dbReference>
<dbReference type="CDD" id="cd04731">
    <property type="entry name" value="HisF"/>
    <property type="match status" value="1"/>
</dbReference>
<dbReference type="FunFam" id="3.20.20.70:FF:000006">
    <property type="entry name" value="Imidazole glycerol phosphate synthase subunit HisF"/>
    <property type="match status" value="1"/>
</dbReference>
<dbReference type="Gene3D" id="3.20.20.70">
    <property type="entry name" value="Aldolase class I"/>
    <property type="match status" value="1"/>
</dbReference>
<dbReference type="HAMAP" id="MF_01013">
    <property type="entry name" value="HisF"/>
    <property type="match status" value="1"/>
</dbReference>
<dbReference type="InterPro" id="IPR013785">
    <property type="entry name" value="Aldolase_TIM"/>
</dbReference>
<dbReference type="InterPro" id="IPR006062">
    <property type="entry name" value="His_biosynth"/>
</dbReference>
<dbReference type="InterPro" id="IPR004651">
    <property type="entry name" value="HisF"/>
</dbReference>
<dbReference type="InterPro" id="IPR050064">
    <property type="entry name" value="IGPS_HisA/HisF"/>
</dbReference>
<dbReference type="InterPro" id="IPR011060">
    <property type="entry name" value="RibuloseP-bd_barrel"/>
</dbReference>
<dbReference type="NCBIfam" id="TIGR00735">
    <property type="entry name" value="hisF"/>
    <property type="match status" value="1"/>
</dbReference>
<dbReference type="PANTHER" id="PTHR21235:SF2">
    <property type="entry name" value="IMIDAZOLE GLYCEROL PHOSPHATE SYNTHASE HISHF"/>
    <property type="match status" value="1"/>
</dbReference>
<dbReference type="PANTHER" id="PTHR21235">
    <property type="entry name" value="IMIDAZOLE GLYCEROL PHOSPHATE SYNTHASE SUBUNIT HISF/H IGP SYNTHASE SUBUNIT HISF/H"/>
    <property type="match status" value="1"/>
</dbReference>
<dbReference type="Pfam" id="PF00977">
    <property type="entry name" value="His_biosynth"/>
    <property type="match status" value="1"/>
</dbReference>
<dbReference type="SUPFAM" id="SSF51366">
    <property type="entry name" value="Ribulose-phoshate binding barrel"/>
    <property type="match status" value="1"/>
</dbReference>
<name>HIS6_XANOM</name>
<feature type="chain" id="PRO_0000230138" description="Imidazole glycerol phosphate synthase subunit HisF">
    <location>
        <begin position="1"/>
        <end position="258"/>
    </location>
</feature>
<feature type="active site" evidence="1">
    <location>
        <position position="11"/>
    </location>
</feature>
<feature type="active site" evidence="1">
    <location>
        <position position="130"/>
    </location>
</feature>
<proteinExistence type="inferred from homology"/>
<reference key="1">
    <citation type="journal article" date="2005" name="Jpn. Agric. Res. Q.">
        <title>Genome sequence of Xanthomonas oryzae pv. oryzae suggests contribution of large numbers of effector genes and insertion sequences to its race diversity.</title>
        <authorList>
            <person name="Ochiai H."/>
            <person name="Inoue Y."/>
            <person name="Takeya M."/>
            <person name="Sasaki A."/>
            <person name="Kaku H."/>
        </authorList>
    </citation>
    <scope>NUCLEOTIDE SEQUENCE [LARGE SCALE GENOMIC DNA]</scope>
    <source>
        <strain>MAFF 311018</strain>
    </source>
</reference>
<keyword id="KW-0028">Amino-acid biosynthesis</keyword>
<keyword id="KW-0963">Cytoplasm</keyword>
<keyword id="KW-0368">Histidine biosynthesis</keyword>
<keyword id="KW-0456">Lyase</keyword>
<sequence length="258" mass="28201">MLSRRIIPCLDVRNGRVVKGVKFHDHIDMGDIVELALRYRAQGADELVFYDIGASPEGRSVDYTWVERVARLIDIPFCVAGGIGDVETARAVLHAGADKISINSPALGRPQLISELADAFGVQCVVVGIDSIREDDGQWRVRRYTGDPSKTQALPMRTLDWVAEAQRLGAGEIVLNCMDNDGVRRGYDIAQLRQVRALCHVPLIASGGAGEMQHFADVFDQADVDGALAASVFHSGAIPIPELKQFLRAQQIEVRDGQ</sequence>
<comment type="function">
    <text evidence="1">IGPS catalyzes the conversion of PRFAR and glutamine to IGP, AICAR and glutamate. The HisF subunit catalyzes the cyclization activity that produces IGP and AICAR from PRFAR using the ammonia provided by the HisH subunit.</text>
</comment>
<comment type="catalytic activity">
    <reaction evidence="1">
        <text>5-[(5-phospho-1-deoxy-D-ribulos-1-ylimino)methylamino]-1-(5-phospho-beta-D-ribosyl)imidazole-4-carboxamide + L-glutamine = D-erythro-1-(imidazol-4-yl)glycerol 3-phosphate + 5-amino-1-(5-phospho-beta-D-ribosyl)imidazole-4-carboxamide + L-glutamate + H(+)</text>
        <dbReference type="Rhea" id="RHEA:24793"/>
        <dbReference type="ChEBI" id="CHEBI:15378"/>
        <dbReference type="ChEBI" id="CHEBI:29985"/>
        <dbReference type="ChEBI" id="CHEBI:58278"/>
        <dbReference type="ChEBI" id="CHEBI:58359"/>
        <dbReference type="ChEBI" id="CHEBI:58475"/>
        <dbReference type="ChEBI" id="CHEBI:58525"/>
        <dbReference type="EC" id="4.3.2.10"/>
    </reaction>
</comment>
<comment type="pathway">
    <text evidence="1">Amino-acid biosynthesis; L-histidine biosynthesis; L-histidine from 5-phospho-alpha-D-ribose 1-diphosphate: step 5/9.</text>
</comment>
<comment type="subunit">
    <text evidence="1">Heterodimer of HisH and HisF.</text>
</comment>
<comment type="subcellular location">
    <subcellularLocation>
        <location evidence="1">Cytoplasm</location>
    </subcellularLocation>
</comment>
<comment type="similarity">
    <text evidence="1">Belongs to the HisA/HisF family.</text>
</comment>
<protein>
    <recommendedName>
        <fullName evidence="1">Imidazole glycerol phosphate synthase subunit HisF</fullName>
        <ecNumber evidence="1">4.3.2.10</ecNumber>
    </recommendedName>
    <alternativeName>
        <fullName evidence="1">IGP synthase cyclase subunit</fullName>
    </alternativeName>
    <alternativeName>
        <fullName evidence="1">IGP synthase subunit HisF</fullName>
    </alternativeName>
    <alternativeName>
        <fullName evidence="1">ImGP synthase subunit HisF</fullName>
        <shortName evidence="1">IGPS subunit HisF</shortName>
    </alternativeName>
</protein>
<gene>
    <name evidence="1" type="primary">hisF</name>
    <name type="ordered locus">XOO2124</name>
</gene>
<evidence type="ECO:0000255" key="1">
    <source>
        <dbReference type="HAMAP-Rule" id="MF_01013"/>
    </source>
</evidence>